<comment type="function">
    <text evidence="1">Transcriptional repressor of the nikABCDE operon. Is active in the presence of excessive concentrations of intracellular nickel.</text>
</comment>
<comment type="cofactor">
    <cofactor evidence="1">
        <name>Ni(2+)</name>
        <dbReference type="ChEBI" id="CHEBI:49786"/>
    </cofactor>
    <text evidence="1">Binds 1 nickel ion per subunit.</text>
</comment>
<comment type="subunit">
    <text evidence="1">Homotetramer.</text>
</comment>
<comment type="similarity">
    <text evidence="1">Belongs to the transcriptional regulatory CopG/NikR family.</text>
</comment>
<protein>
    <recommendedName>
        <fullName evidence="1">Nickel-responsive regulator</fullName>
    </recommendedName>
</protein>
<gene>
    <name evidence="1" type="primary">nikR</name>
    <name type="ordered locus">NT01EI_0269</name>
</gene>
<feature type="chain" id="PRO_1000206379" description="Nickel-responsive regulator">
    <location>
        <begin position="1"/>
        <end position="145"/>
    </location>
</feature>
<feature type="binding site" evidence="1">
    <location>
        <position position="77"/>
    </location>
    <ligand>
        <name>Ni(2+)</name>
        <dbReference type="ChEBI" id="CHEBI:49786"/>
    </ligand>
</feature>
<feature type="binding site" evidence="1">
    <location>
        <position position="88"/>
    </location>
    <ligand>
        <name>Ni(2+)</name>
        <dbReference type="ChEBI" id="CHEBI:49786"/>
    </ligand>
</feature>
<feature type="binding site" evidence="1">
    <location>
        <position position="90"/>
    </location>
    <ligand>
        <name>Ni(2+)</name>
        <dbReference type="ChEBI" id="CHEBI:49786"/>
    </ligand>
</feature>
<feature type="binding site" evidence="1">
    <location>
        <position position="96"/>
    </location>
    <ligand>
        <name>Ni(2+)</name>
        <dbReference type="ChEBI" id="CHEBI:49786"/>
    </ligand>
</feature>
<evidence type="ECO:0000255" key="1">
    <source>
        <dbReference type="HAMAP-Rule" id="MF_00476"/>
    </source>
</evidence>
<dbReference type="EMBL" id="CP001600">
    <property type="protein sequence ID" value="ACR67511.1"/>
    <property type="molecule type" value="Genomic_DNA"/>
</dbReference>
<dbReference type="RefSeq" id="WP_015869720.1">
    <property type="nucleotide sequence ID" value="NZ_CP169062.1"/>
</dbReference>
<dbReference type="SMR" id="C5BCE8"/>
<dbReference type="STRING" id="67780.B6E78_12450"/>
<dbReference type="GeneID" id="69537364"/>
<dbReference type="KEGG" id="eic:NT01EI_0269"/>
<dbReference type="HOGENOM" id="CLU_113319_1_4_6"/>
<dbReference type="Proteomes" id="UP000001485">
    <property type="component" value="Chromosome"/>
</dbReference>
<dbReference type="GO" id="GO:0003700">
    <property type="term" value="F:DNA-binding transcription factor activity"/>
    <property type="evidence" value="ECO:0007669"/>
    <property type="project" value="UniProtKB-UniRule"/>
</dbReference>
<dbReference type="GO" id="GO:0016151">
    <property type="term" value="F:nickel cation binding"/>
    <property type="evidence" value="ECO:0007669"/>
    <property type="project" value="UniProtKB-UniRule"/>
</dbReference>
<dbReference type="GO" id="GO:0043565">
    <property type="term" value="F:sequence-specific DNA binding"/>
    <property type="evidence" value="ECO:0007669"/>
    <property type="project" value="UniProtKB-ARBA"/>
</dbReference>
<dbReference type="GO" id="GO:0010045">
    <property type="term" value="P:response to nickel cation"/>
    <property type="evidence" value="ECO:0007669"/>
    <property type="project" value="InterPro"/>
</dbReference>
<dbReference type="CDD" id="cd22231">
    <property type="entry name" value="RHH_NikR_HicB-like"/>
    <property type="match status" value="1"/>
</dbReference>
<dbReference type="Gene3D" id="3.30.70.1150">
    <property type="entry name" value="ACT-like. Chain A, domain 2"/>
    <property type="match status" value="1"/>
</dbReference>
<dbReference type="Gene3D" id="1.10.1220.10">
    <property type="entry name" value="Met repressor-like"/>
    <property type="match status" value="1"/>
</dbReference>
<dbReference type="HAMAP" id="MF_00476">
    <property type="entry name" value="NikR"/>
    <property type="match status" value="1"/>
</dbReference>
<dbReference type="InterPro" id="IPR027271">
    <property type="entry name" value="Acetolactate_synth/TF_NikR_C"/>
</dbReference>
<dbReference type="InterPro" id="IPR045865">
    <property type="entry name" value="ACT-like_dom_sf"/>
</dbReference>
<dbReference type="InterPro" id="IPR013321">
    <property type="entry name" value="Arc_rbn_hlx_hlx"/>
</dbReference>
<dbReference type="InterPro" id="IPR002145">
    <property type="entry name" value="CopG"/>
</dbReference>
<dbReference type="InterPro" id="IPR050192">
    <property type="entry name" value="CopG/NikR_regulator"/>
</dbReference>
<dbReference type="InterPro" id="IPR022988">
    <property type="entry name" value="Ni_resp_reg_NikR"/>
</dbReference>
<dbReference type="InterPro" id="IPR014160">
    <property type="entry name" value="Nickel_NikR_proteobac"/>
</dbReference>
<dbReference type="InterPro" id="IPR010985">
    <property type="entry name" value="Ribbon_hlx_hlx"/>
</dbReference>
<dbReference type="InterPro" id="IPR014864">
    <property type="entry name" value="TF_NikR_Ni-bd_C"/>
</dbReference>
<dbReference type="NCBIfam" id="TIGR02793">
    <property type="entry name" value="nikR"/>
    <property type="match status" value="1"/>
</dbReference>
<dbReference type="NCBIfam" id="NF002815">
    <property type="entry name" value="PRK02967.1"/>
    <property type="match status" value="1"/>
</dbReference>
<dbReference type="NCBIfam" id="NF003381">
    <property type="entry name" value="PRK04460.1"/>
    <property type="match status" value="1"/>
</dbReference>
<dbReference type="PANTHER" id="PTHR34719">
    <property type="entry name" value="NICKEL-RESPONSIVE REGULATOR"/>
    <property type="match status" value="1"/>
</dbReference>
<dbReference type="PANTHER" id="PTHR34719:SF2">
    <property type="entry name" value="NICKEL-RESPONSIVE REGULATOR"/>
    <property type="match status" value="1"/>
</dbReference>
<dbReference type="Pfam" id="PF08753">
    <property type="entry name" value="NikR_C"/>
    <property type="match status" value="1"/>
</dbReference>
<dbReference type="Pfam" id="PF01402">
    <property type="entry name" value="RHH_1"/>
    <property type="match status" value="1"/>
</dbReference>
<dbReference type="SUPFAM" id="SSF55021">
    <property type="entry name" value="ACT-like"/>
    <property type="match status" value="1"/>
</dbReference>
<dbReference type="SUPFAM" id="SSF47598">
    <property type="entry name" value="Ribbon-helix-helix"/>
    <property type="match status" value="1"/>
</dbReference>
<accession>C5BCE8</accession>
<keyword id="KW-0238">DNA-binding</keyword>
<keyword id="KW-0479">Metal-binding</keyword>
<keyword id="KW-0533">Nickel</keyword>
<keyword id="KW-0678">Repressor</keyword>
<keyword id="KW-0804">Transcription</keyword>
<keyword id="KW-0805">Transcription regulation</keyword>
<proteinExistence type="inferred from homology"/>
<organism>
    <name type="scientific">Edwardsiella ictaluri (strain 93-146)</name>
    <dbReference type="NCBI Taxonomy" id="634503"/>
    <lineage>
        <taxon>Bacteria</taxon>
        <taxon>Pseudomonadati</taxon>
        <taxon>Pseudomonadota</taxon>
        <taxon>Gammaproteobacteria</taxon>
        <taxon>Enterobacterales</taxon>
        <taxon>Hafniaceae</taxon>
        <taxon>Edwardsiella</taxon>
    </lineage>
</organism>
<reference key="1">
    <citation type="submission" date="2009-03" db="EMBL/GenBank/DDBJ databases">
        <title>Complete genome sequence of Edwardsiella ictaluri 93-146.</title>
        <authorList>
            <person name="Williams M.L."/>
            <person name="Gillaspy A.F."/>
            <person name="Dyer D.W."/>
            <person name="Thune R.L."/>
            <person name="Waldbieser G.C."/>
            <person name="Schuster S.C."/>
            <person name="Gipson J."/>
            <person name="Zaitshik J."/>
            <person name="Landry C."/>
            <person name="Lawrence M.L."/>
        </authorList>
    </citation>
    <scope>NUCLEOTIDE SEQUENCE [LARGE SCALE GENOMIC DNA]</scope>
    <source>
        <strain>93-146</strain>
    </source>
</reference>
<name>NIKR_EDWI9</name>
<sequence length="145" mass="15922">MQRVTLSLDDDLMAEIDAIIRAGNYQNRSEVIRDLARAGLQSMAQAPSPSACCVAALFYVYDHESRELSKRLTRTFHDHHDLSLASLHVHLDHGSCLEVSLLKGAGGEVTRFAERVIAERGVRHGKLVVVPGDEGVAPPHPHSHD</sequence>